<evidence type="ECO:0000255" key="1">
    <source>
        <dbReference type="HAMAP-Rule" id="MF_01227"/>
    </source>
</evidence>
<proteinExistence type="inferred from homology"/>
<feature type="chain" id="PRO_0000266144" description="CTP synthase">
    <location>
        <begin position="1"/>
        <end position="545"/>
    </location>
</feature>
<feature type="domain" description="Glutamine amidotransferase type-1" evidence="1">
    <location>
        <begin position="290"/>
        <end position="541"/>
    </location>
</feature>
<feature type="region of interest" description="Amidoligase domain" evidence="1">
    <location>
        <begin position="1"/>
        <end position="265"/>
    </location>
</feature>
<feature type="active site" description="Nucleophile; for glutamine hydrolysis" evidence="1">
    <location>
        <position position="378"/>
    </location>
</feature>
<feature type="active site" evidence="1">
    <location>
        <position position="514"/>
    </location>
</feature>
<feature type="active site" evidence="1">
    <location>
        <position position="516"/>
    </location>
</feature>
<feature type="binding site" evidence="1">
    <location>
        <position position="13"/>
    </location>
    <ligand>
        <name>CTP</name>
        <dbReference type="ChEBI" id="CHEBI:37563"/>
        <note>allosteric inhibitor</note>
    </ligand>
</feature>
<feature type="binding site" evidence="1">
    <location>
        <position position="13"/>
    </location>
    <ligand>
        <name>UTP</name>
        <dbReference type="ChEBI" id="CHEBI:46398"/>
    </ligand>
</feature>
<feature type="binding site" evidence="1">
    <location>
        <begin position="14"/>
        <end position="19"/>
    </location>
    <ligand>
        <name>ATP</name>
        <dbReference type="ChEBI" id="CHEBI:30616"/>
    </ligand>
</feature>
<feature type="binding site" evidence="1">
    <location>
        <position position="71"/>
    </location>
    <ligand>
        <name>ATP</name>
        <dbReference type="ChEBI" id="CHEBI:30616"/>
    </ligand>
</feature>
<feature type="binding site" evidence="1">
    <location>
        <position position="71"/>
    </location>
    <ligand>
        <name>Mg(2+)</name>
        <dbReference type="ChEBI" id="CHEBI:18420"/>
    </ligand>
</feature>
<feature type="binding site" evidence="1">
    <location>
        <position position="139"/>
    </location>
    <ligand>
        <name>Mg(2+)</name>
        <dbReference type="ChEBI" id="CHEBI:18420"/>
    </ligand>
</feature>
<feature type="binding site" evidence="1">
    <location>
        <begin position="146"/>
        <end position="148"/>
    </location>
    <ligand>
        <name>CTP</name>
        <dbReference type="ChEBI" id="CHEBI:37563"/>
        <note>allosteric inhibitor</note>
    </ligand>
</feature>
<feature type="binding site" evidence="1">
    <location>
        <begin position="186"/>
        <end position="191"/>
    </location>
    <ligand>
        <name>CTP</name>
        <dbReference type="ChEBI" id="CHEBI:37563"/>
        <note>allosteric inhibitor</note>
    </ligand>
</feature>
<feature type="binding site" evidence="1">
    <location>
        <begin position="186"/>
        <end position="191"/>
    </location>
    <ligand>
        <name>UTP</name>
        <dbReference type="ChEBI" id="CHEBI:46398"/>
    </ligand>
</feature>
<feature type="binding site" evidence="1">
    <location>
        <position position="222"/>
    </location>
    <ligand>
        <name>CTP</name>
        <dbReference type="ChEBI" id="CHEBI:37563"/>
        <note>allosteric inhibitor</note>
    </ligand>
</feature>
<feature type="binding site" evidence="1">
    <location>
        <position position="222"/>
    </location>
    <ligand>
        <name>UTP</name>
        <dbReference type="ChEBI" id="CHEBI:46398"/>
    </ligand>
</feature>
<feature type="binding site" evidence="1">
    <location>
        <position position="351"/>
    </location>
    <ligand>
        <name>L-glutamine</name>
        <dbReference type="ChEBI" id="CHEBI:58359"/>
    </ligand>
</feature>
<feature type="binding site" evidence="1">
    <location>
        <begin position="379"/>
        <end position="382"/>
    </location>
    <ligand>
        <name>L-glutamine</name>
        <dbReference type="ChEBI" id="CHEBI:58359"/>
    </ligand>
</feature>
<feature type="binding site" evidence="1">
    <location>
        <position position="402"/>
    </location>
    <ligand>
        <name>L-glutamine</name>
        <dbReference type="ChEBI" id="CHEBI:58359"/>
    </ligand>
</feature>
<feature type="binding site" evidence="1">
    <location>
        <position position="469"/>
    </location>
    <ligand>
        <name>L-glutamine</name>
        <dbReference type="ChEBI" id="CHEBI:58359"/>
    </ligand>
</feature>
<name>PYRG_LEGPL</name>
<keyword id="KW-0067">ATP-binding</keyword>
<keyword id="KW-0315">Glutamine amidotransferase</keyword>
<keyword id="KW-0436">Ligase</keyword>
<keyword id="KW-0460">Magnesium</keyword>
<keyword id="KW-0479">Metal-binding</keyword>
<keyword id="KW-0547">Nucleotide-binding</keyword>
<keyword id="KW-0665">Pyrimidine biosynthesis</keyword>
<dbReference type="EC" id="6.3.4.2" evidence="1"/>
<dbReference type="EMBL" id="CR628337">
    <property type="protein sequence ID" value="CAH15429.1"/>
    <property type="molecule type" value="Genomic_DNA"/>
</dbReference>
<dbReference type="RefSeq" id="WP_011215284.1">
    <property type="nucleotide sequence ID" value="NC_006369.1"/>
</dbReference>
<dbReference type="SMR" id="Q5WXA8"/>
<dbReference type="KEGG" id="lpf:lpl1190"/>
<dbReference type="LegioList" id="lpl1190"/>
<dbReference type="HOGENOM" id="CLU_011675_5_0_6"/>
<dbReference type="UniPathway" id="UPA00159">
    <property type="reaction ID" value="UER00277"/>
</dbReference>
<dbReference type="Proteomes" id="UP000002517">
    <property type="component" value="Chromosome"/>
</dbReference>
<dbReference type="GO" id="GO:0005829">
    <property type="term" value="C:cytosol"/>
    <property type="evidence" value="ECO:0007669"/>
    <property type="project" value="TreeGrafter"/>
</dbReference>
<dbReference type="GO" id="GO:0005524">
    <property type="term" value="F:ATP binding"/>
    <property type="evidence" value="ECO:0007669"/>
    <property type="project" value="UniProtKB-KW"/>
</dbReference>
<dbReference type="GO" id="GO:0003883">
    <property type="term" value="F:CTP synthase activity"/>
    <property type="evidence" value="ECO:0007669"/>
    <property type="project" value="UniProtKB-UniRule"/>
</dbReference>
<dbReference type="GO" id="GO:0004359">
    <property type="term" value="F:glutaminase activity"/>
    <property type="evidence" value="ECO:0007669"/>
    <property type="project" value="RHEA"/>
</dbReference>
<dbReference type="GO" id="GO:0042802">
    <property type="term" value="F:identical protein binding"/>
    <property type="evidence" value="ECO:0007669"/>
    <property type="project" value="TreeGrafter"/>
</dbReference>
<dbReference type="GO" id="GO:0046872">
    <property type="term" value="F:metal ion binding"/>
    <property type="evidence" value="ECO:0007669"/>
    <property type="project" value="UniProtKB-KW"/>
</dbReference>
<dbReference type="GO" id="GO:0044210">
    <property type="term" value="P:'de novo' CTP biosynthetic process"/>
    <property type="evidence" value="ECO:0007669"/>
    <property type="project" value="UniProtKB-UniRule"/>
</dbReference>
<dbReference type="GO" id="GO:0019856">
    <property type="term" value="P:pyrimidine nucleobase biosynthetic process"/>
    <property type="evidence" value="ECO:0007669"/>
    <property type="project" value="TreeGrafter"/>
</dbReference>
<dbReference type="CDD" id="cd03113">
    <property type="entry name" value="CTPS_N"/>
    <property type="match status" value="1"/>
</dbReference>
<dbReference type="CDD" id="cd01746">
    <property type="entry name" value="GATase1_CTP_Synthase"/>
    <property type="match status" value="1"/>
</dbReference>
<dbReference type="FunFam" id="3.40.50.300:FF:000009">
    <property type="entry name" value="CTP synthase"/>
    <property type="match status" value="1"/>
</dbReference>
<dbReference type="FunFam" id="3.40.50.880:FF:000002">
    <property type="entry name" value="CTP synthase"/>
    <property type="match status" value="1"/>
</dbReference>
<dbReference type="Gene3D" id="3.40.50.880">
    <property type="match status" value="1"/>
</dbReference>
<dbReference type="Gene3D" id="3.40.50.300">
    <property type="entry name" value="P-loop containing nucleotide triphosphate hydrolases"/>
    <property type="match status" value="1"/>
</dbReference>
<dbReference type="HAMAP" id="MF_01227">
    <property type="entry name" value="PyrG"/>
    <property type="match status" value="1"/>
</dbReference>
<dbReference type="InterPro" id="IPR029062">
    <property type="entry name" value="Class_I_gatase-like"/>
</dbReference>
<dbReference type="InterPro" id="IPR004468">
    <property type="entry name" value="CTP_synthase"/>
</dbReference>
<dbReference type="InterPro" id="IPR017456">
    <property type="entry name" value="CTP_synthase_N"/>
</dbReference>
<dbReference type="InterPro" id="IPR017926">
    <property type="entry name" value="GATASE"/>
</dbReference>
<dbReference type="InterPro" id="IPR033828">
    <property type="entry name" value="GATase1_CTP_Synthase"/>
</dbReference>
<dbReference type="InterPro" id="IPR027417">
    <property type="entry name" value="P-loop_NTPase"/>
</dbReference>
<dbReference type="NCBIfam" id="NF003792">
    <property type="entry name" value="PRK05380.1"/>
    <property type="match status" value="1"/>
</dbReference>
<dbReference type="NCBIfam" id="TIGR00337">
    <property type="entry name" value="PyrG"/>
    <property type="match status" value="1"/>
</dbReference>
<dbReference type="PANTHER" id="PTHR11550">
    <property type="entry name" value="CTP SYNTHASE"/>
    <property type="match status" value="1"/>
</dbReference>
<dbReference type="PANTHER" id="PTHR11550:SF0">
    <property type="entry name" value="CTP SYNTHASE-RELATED"/>
    <property type="match status" value="1"/>
</dbReference>
<dbReference type="Pfam" id="PF06418">
    <property type="entry name" value="CTP_synth_N"/>
    <property type="match status" value="1"/>
</dbReference>
<dbReference type="Pfam" id="PF00117">
    <property type="entry name" value="GATase"/>
    <property type="match status" value="1"/>
</dbReference>
<dbReference type="SUPFAM" id="SSF52317">
    <property type="entry name" value="Class I glutamine amidotransferase-like"/>
    <property type="match status" value="1"/>
</dbReference>
<dbReference type="SUPFAM" id="SSF52540">
    <property type="entry name" value="P-loop containing nucleoside triphosphate hydrolases"/>
    <property type="match status" value="1"/>
</dbReference>
<dbReference type="PROSITE" id="PS51273">
    <property type="entry name" value="GATASE_TYPE_1"/>
    <property type="match status" value="1"/>
</dbReference>
<gene>
    <name evidence="1" type="primary">pyrG</name>
    <name type="ordered locus">lpl1190</name>
</gene>
<protein>
    <recommendedName>
        <fullName evidence="1">CTP synthase</fullName>
        <ecNumber evidence="1">6.3.4.2</ecNumber>
    </recommendedName>
    <alternativeName>
        <fullName evidence="1">Cytidine 5'-triphosphate synthase</fullName>
    </alternativeName>
    <alternativeName>
        <fullName evidence="1">Cytidine triphosphate synthetase</fullName>
        <shortName evidence="1">CTP synthetase</shortName>
        <shortName evidence="1">CTPS</shortName>
    </alternativeName>
    <alternativeName>
        <fullName evidence="1">UTP--ammonia ligase</fullName>
    </alternativeName>
</protein>
<organism>
    <name type="scientific">Legionella pneumophila (strain Lens)</name>
    <dbReference type="NCBI Taxonomy" id="297245"/>
    <lineage>
        <taxon>Bacteria</taxon>
        <taxon>Pseudomonadati</taxon>
        <taxon>Pseudomonadota</taxon>
        <taxon>Gammaproteobacteria</taxon>
        <taxon>Legionellales</taxon>
        <taxon>Legionellaceae</taxon>
        <taxon>Legionella</taxon>
    </lineage>
</organism>
<accession>Q5WXA8</accession>
<reference key="1">
    <citation type="journal article" date="2004" name="Nat. Genet.">
        <title>Evidence in the Legionella pneumophila genome for exploitation of host cell functions and high genome plasticity.</title>
        <authorList>
            <person name="Cazalet C."/>
            <person name="Rusniok C."/>
            <person name="Brueggemann H."/>
            <person name="Zidane N."/>
            <person name="Magnier A."/>
            <person name="Ma L."/>
            <person name="Tichit M."/>
            <person name="Jarraud S."/>
            <person name="Bouchier C."/>
            <person name="Vandenesch F."/>
            <person name="Kunst F."/>
            <person name="Etienne J."/>
            <person name="Glaser P."/>
            <person name="Buchrieser C."/>
        </authorList>
    </citation>
    <scope>NUCLEOTIDE SEQUENCE [LARGE SCALE GENOMIC DNA]</scope>
    <source>
        <strain>Lens</strain>
    </source>
</reference>
<comment type="function">
    <text evidence="1">Catalyzes the ATP-dependent amination of UTP to CTP with either L-glutamine or ammonia as the source of nitrogen. Regulates intracellular CTP levels through interactions with the four ribonucleotide triphosphates.</text>
</comment>
<comment type="catalytic activity">
    <reaction evidence="1">
        <text>UTP + L-glutamine + ATP + H2O = CTP + L-glutamate + ADP + phosphate + 2 H(+)</text>
        <dbReference type="Rhea" id="RHEA:26426"/>
        <dbReference type="ChEBI" id="CHEBI:15377"/>
        <dbReference type="ChEBI" id="CHEBI:15378"/>
        <dbReference type="ChEBI" id="CHEBI:29985"/>
        <dbReference type="ChEBI" id="CHEBI:30616"/>
        <dbReference type="ChEBI" id="CHEBI:37563"/>
        <dbReference type="ChEBI" id="CHEBI:43474"/>
        <dbReference type="ChEBI" id="CHEBI:46398"/>
        <dbReference type="ChEBI" id="CHEBI:58359"/>
        <dbReference type="ChEBI" id="CHEBI:456216"/>
        <dbReference type="EC" id="6.3.4.2"/>
    </reaction>
</comment>
<comment type="catalytic activity">
    <reaction evidence="1">
        <text>L-glutamine + H2O = L-glutamate + NH4(+)</text>
        <dbReference type="Rhea" id="RHEA:15889"/>
        <dbReference type="ChEBI" id="CHEBI:15377"/>
        <dbReference type="ChEBI" id="CHEBI:28938"/>
        <dbReference type="ChEBI" id="CHEBI:29985"/>
        <dbReference type="ChEBI" id="CHEBI:58359"/>
    </reaction>
</comment>
<comment type="catalytic activity">
    <reaction evidence="1">
        <text>UTP + NH4(+) + ATP = CTP + ADP + phosphate + 2 H(+)</text>
        <dbReference type="Rhea" id="RHEA:16597"/>
        <dbReference type="ChEBI" id="CHEBI:15378"/>
        <dbReference type="ChEBI" id="CHEBI:28938"/>
        <dbReference type="ChEBI" id="CHEBI:30616"/>
        <dbReference type="ChEBI" id="CHEBI:37563"/>
        <dbReference type="ChEBI" id="CHEBI:43474"/>
        <dbReference type="ChEBI" id="CHEBI:46398"/>
        <dbReference type="ChEBI" id="CHEBI:456216"/>
    </reaction>
</comment>
<comment type="activity regulation">
    <text evidence="1">Allosterically activated by GTP, when glutamine is the substrate; GTP has no effect on the reaction when ammonia is the substrate. The allosteric effector GTP functions by stabilizing the protein conformation that binds the tetrahedral intermediate(s) formed during glutamine hydrolysis. Inhibited by the product CTP, via allosteric rather than competitive inhibition.</text>
</comment>
<comment type="pathway">
    <text evidence="1">Pyrimidine metabolism; CTP biosynthesis via de novo pathway; CTP from UDP: step 2/2.</text>
</comment>
<comment type="subunit">
    <text evidence="1">Homotetramer.</text>
</comment>
<comment type="miscellaneous">
    <text evidence="1">CTPSs have evolved a hybrid strategy for distinguishing between UTP and CTP. The overlapping regions of the product feedback inhibitory and substrate sites recognize a common feature in both compounds, the triphosphate moiety. To differentiate isosteric substrate and product pyrimidine rings, an additional pocket far from the expected kinase/ligase catalytic site, specifically recognizes the cytosine and ribose portions of the product inhibitor.</text>
</comment>
<comment type="similarity">
    <text evidence="1">Belongs to the CTP synthase family.</text>
</comment>
<sequence length="545" mass="60705">MTKYIFITGGVVSSLGKGIAAASLAAILEARGLRVTLIKLDPYINVDPGTMSPFQHGEVFVTNDGAETDLDLGHYERFVKTTMTKRNNFTSGKIYENVIKKERRGDYLGGTVQVIPHITNEIKRCIKLGADAFDVAMVEIGGTVGDIESLPFLEAIRQMRIELGSQRAIFIHLTLVPYIATSGETKTKPTQHSVKELRSIGIQPDVLICRSEKPLSMADRAKIALFTNVEKEAVISLEDANSIYQIPMILHAQHLDEIVVKKLSLEAKQADLSEWQRVVDMQAVQTMTVKIAMVGKYTELNDAYKSINEALLHAGIHTETKVEIIYFDAEMIEKHGALLLESIDAILVPGGFGERGVEGKIKAIQYAREHKVPFLGICLGMQTAVIEFARNVVGLTGANSTEFNKETLYPVLGLISEWMDADGSKQTRDESTDLGGTMRLGGQYCHLAEGTLARKVYGKSQIIERHRHRYEVNNKYVDSLVKHGLIISGRSADNSLVEMIELADHPWFLACQFHPEFTSNPRDSHPLFKEFVFAARIHHQEKDKK</sequence>